<feature type="chain" id="PRO_1000014193" description="Small ribosomal subunit protein uS7">
    <location>
        <begin position="1"/>
        <end position="157"/>
    </location>
</feature>
<evidence type="ECO:0000255" key="1">
    <source>
        <dbReference type="HAMAP-Rule" id="MF_00480"/>
    </source>
</evidence>
<evidence type="ECO:0000305" key="2"/>
<name>RS7_FRAT1</name>
<keyword id="KW-0687">Ribonucleoprotein</keyword>
<keyword id="KW-0689">Ribosomal protein</keyword>
<keyword id="KW-0694">RNA-binding</keyword>
<keyword id="KW-0699">rRNA-binding</keyword>
<keyword id="KW-0820">tRNA-binding</keyword>
<proteinExistence type="inferred from homology"/>
<organism>
    <name type="scientific">Francisella tularensis subsp. tularensis (strain FSC 198)</name>
    <dbReference type="NCBI Taxonomy" id="393115"/>
    <lineage>
        <taxon>Bacteria</taxon>
        <taxon>Pseudomonadati</taxon>
        <taxon>Pseudomonadota</taxon>
        <taxon>Gammaproteobacteria</taxon>
        <taxon>Thiotrichales</taxon>
        <taxon>Francisellaceae</taxon>
        <taxon>Francisella</taxon>
    </lineage>
</organism>
<accession>Q14JC3</accession>
<sequence>MSRRNRAPKRDILPDPKYKSQVVAKFVNHIMLSGKKSIAEKIVYGAFDKIKAKDASANEVEVFEKALESVSPMVEVKSRRVGGATYQVPVEVRPERRQTLGMRWIIDAARKRKENTMGDRVAAEILEAVEGRGAAVKKREDTHKMAEANKAFAHFRW</sequence>
<comment type="function">
    <text evidence="1">One of the primary rRNA binding proteins, it binds directly to 16S rRNA where it nucleates assembly of the head domain of the 30S subunit. Is located at the subunit interface close to the decoding center, probably blocks exit of the E-site tRNA.</text>
</comment>
<comment type="subunit">
    <text evidence="1">Part of the 30S ribosomal subunit. Contacts proteins S9 and S11.</text>
</comment>
<comment type="similarity">
    <text evidence="1">Belongs to the universal ribosomal protein uS7 family.</text>
</comment>
<dbReference type="EMBL" id="AM286280">
    <property type="protein sequence ID" value="CAL08338.1"/>
    <property type="molecule type" value="Genomic_DNA"/>
</dbReference>
<dbReference type="RefSeq" id="WP_003021606.1">
    <property type="nucleotide sequence ID" value="NC_008245.1"/>
</dbReference>
<dbReference type="SMR" id="Q14JC3"/>
<dbReference type="GeneID" id="75264264"/>
<dbReference type="KEGG" id="ftf:FTF0322"/>
<dbReference type="HOGENOM" id="CLU_072226_1_1_6"/>
<dbReference type="GO" id="GO:0015935">
    <property type="term" value="C:small ribosomal subunit"/>
    <property type="evidence" value="ECO:0007669"/>
    <property type="project" value="InterPro"/>
</dbReference>
<dbReference type="GO" id="GO:0019843">
    <property type="term" value="F:rRNA binding"/>
    <property type="evidence" value="ECO:0007669"/>
    <property type="project" value="UniProtKB-UniRule"/>
</dbReference>
<dbReference type="GO" id="GO:0003735">
    <property type="term" value="F:structural constituent of ribosome"/>
    <property type="evidence" value="ECO:0007669"/>
    <property type="project" value="InterPro"/>
</dbReference>
<dbReference type="GO" id="GO:0000049">
    <property type="term" value="F:tRNA binding"/>
    <property type="evidence" value="ECO:0007669"/>
    <property type="project" value="UniProtKB-UniRule"/>
</dbReference>
<dbReference type="GO" id="GO:0006412">
    <property type="term" value="P:translation"/>
    <property type="evidence" value="ECO:0007669"/>
    <property type="project" value="UniProtKB-UniRule"/>
</dbReference>
<dbReference type="CDD" id="cd14869">
    <property type="entry name" value="uS7_Bacteria"/>
    <property type="match status" value="1"/>
</dbReference>
<dbReference type="FunFam" id="1.10.455.10:FF:000001">
    <property type="entry name" value="30S ribosomal protein S7"/>
    <property type="match status" value="1"/>
</dbReference>
<dbReference type="Gene3D" id="1.10.455.10">
    <property type="entry name" value="Ribosomal protein S7 domain"/>
    <property type="match status" value="1"/>
</dbReference>
<dbReference type="HAMAP" id="MF_00480_B">
    <property type="entry name" value="Ribosomal_uS7_B"/>
    <property type="match status" value="1"/>
</dbReference>
<dbReference type="InterPro" id="IPR000235">
    <property type="entry name" value="Ribosomal_uS7"/>
</dbReference>
<dbReference type="InterPro" id="IPR005717">
    <property type="entry name" value="Ribosomal_uS7_bac/org-type"/>
</dbReference>
<dbReference type="InterPro" id="IPR020606">
    <property type="entry name" value="Ribosomal_uS7_CS"/>
</dbReference>
<dbReference type="InterPro" id="IPR023798">
    <property type="entry name" value="Ribosomal_uS7_dom"/>
</dbReference>
<dbReference type="InterPro" id="IPR036823">
    <property type="entry name" value="Ribosomal_uS7_dom_sf"/>
</dbReference>
<dbReference type="NCBIfam" id="TIGR01029">
    <property type="entry name" value="rpsG_bact"/>
    <property type="match status" value="1"/>
</dbReference>
<dbReference type="PANTHER" id="PTHR11205">
    <property type="entry name" value="RIBOSOMAL PROTEIN S7"/>
    <property type="match status" value="1"/>
</dbReference>
<dbReference type="Pfam" id="PF00177">
    <property type="entry name" value="Ribosomal_S7"/>
    <property type="match status" value="1"/>
</dbReference>
<dbReference type="PIRSF" id="PIRSF002122">
    <property type="entry name" value="RPS7p_RPS7a_RPS5e_RPS7o"/>
    <property type="match status" value="1"/>
</dbReference>
<dbReference type="SUPFAM" id="SSF47973">
    <property type="entry name" value="Ribosomal protein S7"/>
    <property type="match status" value="1"/>
</dbReference>
<dbReference type="PROSITE" id="PS00052">
    <property type="entry name" value="RIBOSOMAL_S7"/>
    <property type="match status" value="1"/>
</dbReference>
<protein>
    <recommendedName>
        <fullName evidence="1">Small ribosomal subunit protein uS7</fullName>
    </recommendedName>
    <alternativeName>
        <fullName evidence="2">30S ribosomal protein S7</fullName>
    </alternativeName>
</protein>
<gene>
    <name evidence="1" type="primary">rpsG</name>
    <name type="ordered locus">FTF0322</name>
</gene>
<reference key="1">
    <citation type="journal article" date="2007" name="PLoS ONE">
        <title>Genome sequencing shows that European isolates of Francisella tularensis subspecies tularensis are almost identical to US laboratory strain Schu S4.</title>
        <authorList>
            <person name="Chaudhuri R.R."/>
            <person name="Ren C.-P."/>
            <person name="Desmond L."/>
            <person name="Vincent G.A."/>
            <person name="Silman N.J."/>
            <person name="Brehm J.K."/>
            <person name="Elmore M.J."/>
            <person name="Hudson M.J."/>
            <person name="Forsman M."/>
            <person name="Isherwood K.E."/>
            <person name="Gurycova D."/>
            <person name="Minton N.P."/>
            <person name="Titball R.W."/>
            <person name="Pallen M.J."/>
            <person name="Vipond R."/>
        </authorList>
    </citation>
    <scope>NUCLEOTIDE SEQUENCE [LARGE SCALE GENOMIC DNA]</scope>
    <source>
        <strain>FSC 198</strain>
    </source>
</reference>